<keyword id="KW-0025">Alternative splicing</keyword>
<keyword id="KW-1048">Host nucleus</keyword>
<keyword id="KW-0472">Membrane</keyword>
<keyword id="KW-0694">RNA-binding</keyword>
<keyword id="KW-0468">Viral matrix protein</keyword>
<keyword id="KW-0946">Virion</keyword>
<evidence type="ECO:0000255" key="1">
    <source>
        <dbReference type="HAMAP-Rule" id="MF_04068"/>
    </source>
</evidence>
<protein>
    <recommendedName>
        <fullName evidence="1">Matrix protein 1</fullName>
        <shortName evidence="1">M1</shortName>
    </recommendedName>
</protein>
<comment type="function">
    <text evidence="1">Plays critical roles in virus replication, from virus entry and uncoating to assembly and budding of the virus particle. M1 binding to ribonucleocapsids (RNPs) in nucleus seems to inhibit viral transcription. Interaction of viral NEP with M1-RNP is thought to promote nuclear export of the complex, which is targeted to the virion assembly site at the apical plasma membrane in polarized epithelial cells. Interactions with NA and HA may bring M1, a non-raft-associated protein, into lipid rafts. Forms a continuous shell on the inner side of the lipid bilayer in virion, where it binds the RNP. During virus entry into cell, the M2 ion channel acidifies the internal virion core, inducing M1 dissociation from the RNP. M1-free RNPs are transported to the nucleus, where viral transcription and replication can take place.</text>
</comment>
<comment type="function">
    <text evidence="1">Determines the virion's shape: spherical or filamentous. Clinical isolates of influenza are characterized by the presence of significant proportion of filamentous virions, whereas after multiple passage on eggs or cell culture, virions have only spherical morphology. Filamentous virions are thought to be important to infect neighboring cells, and spherical virions more suited to spread through aerosol between hosts organisms.</text>
</comment>
<comment type="subunit">
    <text evidence="1">Homodimer and homomultimer. Interacts with NEP. Binds ribonucleocapsid by both interacting with genomic RNA and NP protein. May interact with HA and NA. Cannot bind NP without genomic RNA.</text>
</comment>
<comment type="subcellular location">
    <subcellularLocation>
        <location evidence="1">Virion membrane</location>
        <topology evidence="1">Peripheral membrane protein</topology>
        <orientation evidence="1">Cytoplasmic side</orientation>
    </subcellularLocation>
    <subcellularLocation>
        <location evidence="1">Host nucleus</location>
    </subcellularLocation>
</comment>
<comment type="alternative products">
    <event type="alternative splicing"/>
    <isoform>
        <id>Q6DPU0-1</id>
        <name>M1</name>
        <sequence type="displayed"/>
    </isoform>
    <isoform>
        <id>Q6DPU1-1</id>
        <name>M2</name>
        <sequence type="external"/>
    </isoform>
    <text>Only the first 9 residues are shared by the 2 isoforms.</text>
</comment>
<comment type="miscellaneous">
    <text evidence="1">Most abundant protein in virion. When expressed alone can form virus-like particles in transfected cells.</text>
</comment>
<comment type="similarity">
    <text evidence="1">Belongs to the influenza viruses Matrix protein M1 family.</text>
</comment>
<reference key="1">
    <citation type="journal article" date="2004" name="Nature">
        <title>Genesis of a highly pathogenic and potentially pandemic H5N1 influenza virus in eastern Asia.</title>
        <authorList>
            <person name="Li K.S."/>
            <person name="Guan Y."/>
            <person name="Wang J."/>
            <person name="Smith G.J.D."/>
            <person name="Xu K.M."/>
            <person name="Duan L."/>
            <person name="Rahardjo A.P."/>
            <person name="Puthavathana P."/>
            <person name="Buranathai C."/>
            <person name="Nguyen T.D."/>
            <person name="Estoepangestie A.T.S."/>
            <person name="Chaisingh A."/>
            <person name="Auewarakul P."/>
            <person name="Long H.T."/>
            <person name="Hanh N.T.H."/>
            <person name="Webby R.J."/>
            <person name="Poon L.L.M."/>
            <person name="Chen H."/>
            <person name="Shortridge K.F."/>
            <person name="Yuen K.Y."/>
            <person name="Webster R.G."/>
            <person name="Peiris J.S.M."/>
        </authorList>
    </citation>
    <scope>NUCLEOTIDE SEQUENCE [GENOMIC RNA]</scope>
</reference>
<accession>Q6DPU0</accession>
<dbReference type="EMBL" id="AY651400">
    <property type="protein sequence ID" value="AAT70553.1"/>
    <property type="molecule type" value="Genomic_RNA"/>
</dbReference>
<dbReference type="SMR" id="Q6DPU0"/>
<dbReference type="GO" id="GO:0042025">
    <property type="term" value="C:host cell nucleus"/>
    <property type="evidence" value="ECO:0007669"/>
    <property type="project" value="UniProtKB-SubCell"/>
</dbReference>
<dbReference type="GO" id="GO:0016020">
    <property type="term" value="C:membrane"/>
    <property type="evidence" value="ECO:0007669"/>
    <property type="project" value="UniProtKB-KW"/>
</dbReference>
<dbReference type="GO" id="GO:0055036">
    <property type="term" value="C:virion membrane"/>
    <property type="evidence" value="ECO:0007669"/>
    <property type="project" value="UniProtKB-SubCell"/>
</dbReference>
<dbReference type="GO" id="GO:0003723">
    <property type="term" value="F:RNA binding"/>
    <property type="evidence" value="ECO:0007669"/>
    <property type="project" value="UniProtKB-UniRule"/>
</dbReference>
<dbReference type="GO" id="GO:0039660">
    <property type="term" value="F:structural constituent of virion"/>
    <property type="evidence" value="ECO:0007669"/>
    <property type="project" value="UniProtKB-UniRule"/>
</dbReference>
<dbReference type="GO" id="GO:0046761">
    <property type="term" value="P:viral budding from plasma membrane"/>
    <property type="evidence" value="ECO:0007669"/>
    <property type="project" value="UniProtKB-UniRule"/>
</dbReference>
<dbReference type="FunFam" id="1.10.10.180:FF:000001">
    <property type="entry name" value="Matrix protein 1"/>
    <property type="match status" value="1"/>
</dbReference>
<dbReference type="FunFam" id="1.20.91.10:FF:000001">
    <property type="entry name" value="Matrix protein 1"/>
    <property type="match status" value="1"/>
</dbReference>
<dbReference type="Gene3D" id="1.10.10.180">
    <property type="match status" value="1"/>
</dbReference>
<dbReference type="Gene3D" id="1.20.91.10">
    <property type="match status" value="1"/>
</dbReference>
<dbReference type="HAMAP" id="MF_04068">
    <property type="entry name" value="INFV_M1"/>
    <property type="match status" value="1"/>
</dbReference>
<dbReference type="InterPro" id="IPR036039">
    <property type="entry name" value="Flu_matrix_M1"/>
</dbReference>
<dbReference type="InterPro" id="IPR013188">
    <property type="entry name" value="Flu_matrix_M1_C"/>
</dbReference>
<dbReference type="InterPro" id="IPR001561">
    <property type="entry name" value="Flu_matrix_M1_N"/>
</dbReference>
<dbReference type="InterPro" id="IPR015423">
    <property type="entry name" value="Flu_matrix_M1_N_sub1"/>
</dbReference>
<dbReference type="InterPro" id="IPR015799">
    <property type="entry name" value="Flu_matrix_M1_N_sub2"/>
</dbReference>
<dbReference type="InterPro" id="IPR037533">
    <property type="entry name" value="INFV_M1"/>
</dbReference>
<dbReference type="Pfam" id="PF00598">
    <property type="entry name" value="Flu_M1"/>
    <property type="match status" value="1"/>
</dbReference>
<dbReference type="Pfam" id="PF08289">
    <property type="entry name" value="Flu_M1_C"/>
    <property type="match status" value="1"/>
</dbReference>
<dbReference type="SMART" id="SM00759">
    <property type="entry name" value="Flu_M1_C"/>
    <property type="match status" value="1"/>
</dbReference>
<dbReference type="SUPFAM" id="SSF48145">
    <property type="entry name" value="Influenza virus matrix protein M1"/>
    <property type="match status" value="1"/>
</dbReference>
<feature type="chain" id="PRO_0000311612" description="Matrix protein 1">
    <location>
        <begin position="1"/>
        <end position="252"/>
    </location>
</feature>
<feature type="region of interest" description="Membrane-binding" evidence="1">
    <location>
        <begin position="1"/>
        <end position="164"/>
    </location>
</feature>
<feature type="region of interest" description="RNP-binding" evidence="1">
    <location>
        <begin position="165"/>
        <end position="252"/>
    </location>
</feature>
<feature type="short sequence motif" description="Nuclear localization signal" evidence="1">
    <location>
        <begin position="101"/>
        <end position="105"/>
    </location>
</feature>
<sequence>MSLLTEVETYVLSIVPSGPLKAEIAQRLEDVFAGKNTDLEALMEWLKTRPILSPLTKGILGFVFTLTVPSERGLQRRRFVQNALNGNGDPNNMDRAVKLYKKLKREITFHGAKEVALSYSTGALASCMGLIYNRMGTVTTEVAFGLVCATCEQIADSQHRSHRQMATITNPLIRHENRMVLASTTAKAMEQMAGSSEQAAEAMEVASQARQMVQAMRTIGTHPNSSTGLRDNLLENLQAYQNRMGVQMQRFK</sequence>
<proteinExistence type="inferred from homology"/>
<name>M1_I02A2</name>
<organismHost>
    <name type="scientific">Aves</name>
    <dbReference type="NCBI Taxonomy" id="8782"/>
</organismHost>
<organismHost>
    <name type="scientific">Felis catus</name>
    <name type="common">Cat</name>
    <name type="synonym">Felis silvestris catus</name>
    <dbReference type="NCBI Taxonomy" id="9685"/>
</organismHost>
<organismHost>
    <name type="scientific">Homo sapiens</name>
    <name type="common">Human</name>
    <dbReference type="NCBI Taxonomy" id="9606"/>
</organismHost>
<organismHost>
    <name type="scientific">Panthera pardus</name>
    <name type="common">Leopard</name>
    <name type="synonym">Felis pardus</name>
    <dbReference type="NCBI Taxonomy" id="9691"/>
</organismHost>
<organismHost>
    <name type="scientific">Panthera tigris</name>
    <name type="common">Tiger</name>
    <dbReference type="NCBI Taxonomy" id="9694"/>
</organismHost>
<organismHost>
    <name type="scientific">Sus scrofa</name>
    <name type="common">Pig</name>
    <dbReference type="NCBI Taxonomy" id="9823"/>
</organismHost>
<gene>
    <name evidence="1" type="primary">M</name>
</gene>
<organism>
    <name type="scientific">Influenza A virus (strain A/Chicken/Hong Kong/31.2/2002 H5N1 genotype X1)</name>
    <dbReference type="NCBI Taxonomy" id="284169"/>
    <lineage>
        <taxon>Viruses</taxon>
        <taxon>Riboviria</taxon>
        <taxon>Orthornavirae</taxon>
        <taxon>Negarnaviricota</taxon>
        <taxon>Polyploviricotina</taxon>
        <taxon>Insthoviricetes</taxon>
        <taxon>Articulavirales</taxon>
        <taxon>Orthomyxoviridae</taxon>
        <taxon>Alphainfluenzavirus</taxon>
        <taxon>Alphainfluenzavirus influenzae</taxon>
        <taxon>Influenza A virus</taxon>
    </lineage>
</organism>